<dbReference type="EC" id="1.12.99.-"/>
<dbReference type="EMBL" id="X61203">
    <property type="protein sequence ID" value="CAA43506.1"/>
    <property type="molecule type" value="Genomic_DNA"/>
</dbReference>
<dbReference type="PIR" id="S16727">
    <property type="entry name" value="S16727"/>
</dbReference>
<dbReference type="SMR" id="Q00404"/>
<dbReference type="GO" id="GO:0008901">
    <property type="term" value="F:ferredoxin hydrogenase activity"/>
    <property type="evidence" value="ECO:0007669"/>
    <property type="project" value="InterPro"/>
</dbReference>
<dbReference type="GO" id="GO:0016151">
    <property type="term" value="F:nickel cation binding"/>
    <property type="evidence" value="ECO:0007669"/>
    <property type="project" value="InterPro"/>
</dbReference>
<dbReference type="Gene3D" id="1.10.645.10">
    <property type="entry name" value="Cytochrome-c3 Hydrogenase, chain B"/>
    <property type="match status" value="1"/>
</dbReference>
<dbReference type="InterPro" id="IPR001501">
    <property type="entry name" value="Ni-dep_hyd_lsu"/>
</dbReference>
<dbReference type="InterPro" id="IPR018194">
    <property type="entry name" value="Ni-dep_hyd_lsu_Ni_BS"/>
</dbReference>
<dbReference type="InterPro" id="IPR029014">
    <property type="entry name" value="NiFe-Hase_large"/>
</dbReference>
<dbReference type="PANTHER" id="PTHR43600">
    <property type="entry name" value="COENZYME F420 HYDROGENASE, SUBUNIT ALPHA"/>
    <property type="match status" value="1"/>
</dbReference>
<dbReference type="PANTHER" id="PTHR43600:SF2">
    <property type="entry name" value="F420-NON-REDUCING HYDROGENASE VHU SUBUNIT A"/>
    <property type="match status" value="1"/>
</dbReference>
<dbReference type="Pfam" id="PF00374">
    <property type="entry name" value="NiFeSe_Hases"/>
    <property type="match status" value="2"/>
</dbReference>
<dbReference type="SUPFAM" id="SSF56762">
    <property type="entry name" value="HydB/Nqo4-like"/>
    <property type="match status" value="1"/>
</dbReference>
<dbReference type="PROSITE" id="PS00507">
    <property type="entry name" value="NI_HGENASE_L_1"/>
    <property type="match status" value="1"/>
</dbReference>
<dbReference type="PROSITE" id="PS00508">
    <property type="entry name" value="NI_HGENASE_L_2"/>
    <property type="match status" value="1"/>
</dbReference>
<evidence type="ECO:0000250" key="1"/>
<evidence type="ECO:0000255" key="2"/>
<evidence type="ECO:0000269" key="3">
    <source>
    </source>
</evidence>
<evidence type="ECO:0000305" key="4"/>
<proteinExistence type="evidence at transcript level"/>
<comment type="cofactor">
    <cofactor evidence="4">
        <name>Ni(2+)</name>
        <dbReference type="ChEBI" id="CHEBI:49786"/>
    </cofactor>
</comment>
<comment type="subunit">
    <text evidence="1">The F420-non-reducing hydrogenase vhc is composed of three subunits; VhcA, VhcD and VhcG.</text>
</comment>
<comment type="induction">
    <text evidence="3">By selenium deprivation.</text>
</comment>
<comment type="similarity">
    <text evidence="4">Belongs to the [NiFe]/[NiFeSe] hydrogenase large subunit family.</text>
</comment>
<keyword id="KW-0479">Metal-binding</keyword>
<keyword id="KW-0533">Nickel</keyword>
<keyword id="KW-0560">Oxidoreductase</keyword>
<reference key="1">
    <citation type="journal article" date="1992" name="Mol. Gen. Genet.">
        <title>Methanococcus voltae harbors four gene clusters potentially encoding two [NiFe] and two [NiFeSe] hydrogenases, each of the cofactor F420-reducing or F420-non-reducing types.</title>
        <authorList>
            <person name="Halboth S."/>
            <person name="Klein A."/>
        </authorList>
    </citation>
    <scope>NUCLEOTIDE SEQUENCE [GENOMIC DNA]</scope>
    <source>
        <strain>ATCC 33273 / DSM 1537 / NBRC 100457 / OCM 70 / PS</strain>
    </source>
</reference>
<reference key="2">
    <citation type="journal article" date="1994" name="Mol. Gen. Genet.">
        <title>Selenium is involved in the negative regulation of the expression of selenium-free [NiFe] hydrogenases in Methanococcus voltae.</title>
        <authorList>
            <person name="Berghoefer Y."/>
            <person name="Agha-Amiri K."/>
            <person name="Klein A."/>
        </authorList>
    </citation>
    <scope>TRANSCRIPTIONAL REGULATION</scope>
    <source>
        <strain>ATCC 33273 / DSM 1537 / NBRC 100457 / OCM 70 / PS</strain>
    </source>
</reference>
<gene>
    <name type="primary">vhcA</name>
</gene>
<sequence>MTKLSIEPVTRVEGHGKVTLSFDDSGKLDKVNFHVVEVRGFEKFLEGRYIEDAPIFTPRICGICQVSHHLASAKAVDNVFGVKIPETANMLRNLIHQASNVHSHALHFGMLASPDLMFPTTDDALKRNLLGVAGENMDMIKDSIAMRKVGQTIVQKVGGRAIHPVTAIVGGQSKPLTEEERDELLTLSDNLVETAERTLNVGKEMVENLKEKDLMNLGYFESYHMGLVNNGAQDIYEGNIRVVNSEGKIEYEFDPAEYANYITEGVRPYSYLKFLALLKRRGEGKGAYRVNTLSRLNVCDKMPTPIAQKYYEEFVKTYGKPAHQPMLFHYARLIELLSSSELIRKFLEDDKIVDTDVRAEVDPKNITGEGVGCVEAPRGTLIHHFKTDDRGIINDTNLVVATVQNNPAMDIGVQKVAEKYIKTPEVAKPHILNHMEMVIRAYDPCLSCATHTIGEEPKILSIHVCQGGKLIKTL</sequence>
<feature type="chain" id="PRO_0000199729" description="F420-non-reducing hydrogenase vhc subunit A">
    <location>
        <begin position="1"/>
        <end position="474"/>
    </location>
</feature>
<feature type="binding site" evidence="2">
    <location>
        <position position="61"/>
    </location>
    <ligand>
        <name>Ni(2+)</name>
        <dbReference type="ChEBI" id="CHEBI:49786"/>
    </ligand>
</feature>
<feature type="binding site" evidence="2">
    <location>
        <position position="64"/>
    </location>
    <ligand>
        <name>Ni(2+)</name>
        <dbReference type="ChEBI" id="CHEBI:49786"/>
    </ligand>
</feature>
<feature type="binding site" evidence="2">
    <location>
        <position position="445"/>
    </location>
    <ligand>
        <name>Ni(2+)</name>
        <dbReference type="ChEBI" id="CHEBI:49786"/>
    </ligand>
</feature>
<feature type="binding site" evidence="2">
    <location>
        <position position="448"/>
    </location>
    <ligand>
        <name>Ni(2+)</name>
        <dbReference type="ChEBI" id="CHEBI:49786"/>
    </ligand>
</feature>
<organism>
    <name type="scientific">Methanococcus voltae</name>
    <dbReference type="NCBI Taxonomy" id="2188"/>
    <lineage>
        <taxon>Archaea</taxon>
        <taxon>Methanobacteriati</taxon>
        <taxon>Methanobacteriota</taxon>
        <taxon>Methanomada group</taxon>
        <taxon>Methanococci</taxon>
        <taxon>Methanococcales</taxon>
        <taxon>Methanococcaceae</taxon>
        <taxon>Methanococcus</taxon>
    </lineage>
</organism>
<name>VHCA_METVO</name>
<protein>
    <recommendedName>
        <fullName>F420-non-reducing hydrogenase vhc subunit A</fullName>
        <ecNumber>1.12.99.-</ecNumber>
    </recommendedName>
</protein>
<accession>Q00404</accession>